<organism>
    <name type="scientific">Xenopus laevis</name>
    <name type="common">African clawed frog</name>
    <dbReference type="NCBI Taxonomy" id="8355"/>
    <lineage>
        <taxon>Eukaryota</taxon>
        <taxon>Metazoa</taxon>
        <taxon>Chordata</taxon>
        <taxon>Craniata</taxon>
        <taxon>Vertebrata</taxon>
        <taxon>Euteleostomi</taxon>
        <taxon>Amphibia</taxon>
        <taxon>Batrachia</taxon>
        <taxon>Anura</taxon>
        <taxon>Pipoidea</taxon>
        <taxon>Pipidae</taxon>
        <taxon>Xenopodinae</taxon>
        <taxon>Xenopus</taxon>
        <taxon>Xenopus</taxon>
    </lineage>
</organism>
<reference key="1">
    <citation type="journal article" date="1999" name="Eur. J. Biochem.">
        <title>Xenopus laevis occludin. Identification of in vitro phosphorylation sites by protein kinase CK2 and association with cingulin.</title>
        <authorList>
            <person name="Cordenonsi M."/>
            <person name="Turco F."/>
            <person name="D'Atri F."/>
            <person name="Hammar E."/>
            <person name="Martinucci G."/>
            <person name="Meggio F."/>
            <person name="Citi S."/>
        </authorList>
    </citation>
    <scope>NUCLEOTIDE SEQUENCE [MRNA]</scope>
    <scope>PHOSPHORYLATION AT THR-375 AND SER-379</scope>
    <source>
        <tissue>Ovary</tissue>
    </source>
</reference>
<reference key="2">
    <citation type="journal article" date="1997" name="J. Cell Sci.">
        <title>Occludin dephosphorylation in early development of Xenopus laevis.</title>
        <authorList>
            <person name="Cordenonsi M."/>
            <person name="Mazzon E."/>
            <person name="De Rigo L."/>
            <person name="Baraldo S."/>
            <person name="Meggio F."/>
            <person name="Citi S."/>
        </authorList>
    </citation>
    <scope>CHARACTERIZATION</scope>
</reference>
<name>OCLN_XENLA</name>
<evidence type="ECO:0000250" key="1"/>
<evidence type="ECO:0000250" key="2">
    <source>
        <dbReference type="UniProtKB" id="Q16625"/>
    </source>
</evidence>
<evidence type="ECO:0000255" key="3"/>
<evidence type="ECO:0000255" key="4">
    <source>
        <dbReference type="PROSITE-ProRule" id="PRU00114"/>
    </source>
</evidence>
<evidence type="ECO:0000255" key="5">
    <source>
        <dbReference type="PROSITE-ProRule" id="PRU00581"/>
    </source>
</evidence>
<evidence type="ECO:0000255" key="6">
    <source>
        <dbReference type="PROSITE-ProRule" id="PRU01324"/>
    </source>
</evidence>
<evidence type="ECO:0000256" key="7">
    <source>
        <dbReference type="SAM" id="MobiDB-lite"/>
    </source>
</evidence>
<evidence type="ECO:0000269" key="8">
    <source>
    </source>
</evidence>
<evidence type="ECO:0000305" key="9"/>
<protein>
    <recommendedName>
        <fullName>Occludin</fullName>
    </recommendedName>
</protein>
<keyword id="KW-0965">Cell junction</keyword>
<keyword id="KW-1003">Cell membrane</keyword>
<keyword id="KW-0175">Coiled coil</keyword>
<keyword id="KW-1015">Disulfide bond</keyword>
<keyword id="KW-0472">Membrane</keyword>
<keyword id="KW-0597">Phosphoprotein</keyword>
<keyword id="KW-1185">Reference proteome</keyword>
<keyword id="KW-0796">Tight junction</keyword>
<keyword id="KW-0812">Transmembrane</keyword>
<keyword id="KW-1133">Transmembrane helix</keyword>
<accession>Q9PUN1</accession>
<sequence>MYSRPSNYAPSKDVYGGEMRSQPAYSYYPEEEIQHFYRWSSPPGIIKIMSILIVVMCVGIFACVASTLPWDLDITGQSMGYGMGSGSYSGGYTGYGFGGSQMGLGFAYGGNYTDPRAAKGFILAMAAFCFIIGLVIFVMLVTRTPLSTSRKFYLIVIIVSAIIGGLVFIATIVYTVGVNPVAQASGSAFYTQIVSICNQFYSPVQTGVFVNQYLYHYCVVEPQEAIAIVLGFLIVVAFAIIIFFAVKTRKKINQYGKTNILWKKNHIYEDGDPQVEQWVKNVAENSAPALSDYNEKVDGSVADYRSANGVQAYPSQNNISHPIAEEELPLKEDYGMSPRHYSSSSDATTKKAPPKKRPGKPRRSDLDTNEGGYNTGGESADELEDDSWDSEYPPITQTKQRQEYKQEFASDLHEYKRLQAELDELSKIPVPSLNRELGQSSRKDSEEYRTVADKYNRLKEIKSSADYRNKKKRCKGLKTKLNHIKQMVSNYDK</sequence>
<dbReference type="EMBL" id="AF170275">
    <property type="protein sequence ID" value="AAD53725.1"/>
    <property type="molecule type" value="mRNA"/>
</dbReference>
<dbReference type="RefSeq" id="NP_001081943.1">
    <property type="nucleotide sequence ID" value="NM_001088474.1"/>
</dbReference>
<dbReference type="SMR" id="Q9PUN1"/>
<dbReference type="IntAct" id="Q9PUN1">
    <property type="interactions" value="1"/>
</dbReference>
<dbReference type="iPTMnet" id="Q9PUN1"/>
<dbReference type="AGR" id="Xenbase:XB-GENE-866529"/>
<dbReference type="Xenbase" id="XB-GENE-866529">
    <property type="gene designation" value="ocln.S"/>
</dbReference>
<dbReference type="Proteomes" id="UP000186698">
    <property type="component" value="Unplaced"/>
</dbReference>
<dbReference type="GO" id="GO:0016324">
    <property type="term" value="C:apical plasma membrane"/>
    <property type="evidence" value="ECO:0000318"/>
    <property type="project" value="GO_Central"/>
</dbReference>
<dbReference type="GO" id="GO:0005923">
    <property type="term" value="C:bicellular tight junction"/>
    <property type="evidence" value="ECO:0000318"/>
    <property type="project" value="GO_Central"/>
</dbReference>
<dbReference type="GO" id="GO:0031410">
    <property type="term" value="C:cytoplasmic vesicle"/>
    <property type="evidence" value="ECO:0000318"/>
    <property type="project" value="GO_Central"/>
</dbReference>
<dbReference type="GO" id="GO:0070830">
    <property type="term" value="P:bicellular tight junction assembly"/>
    <property type="evidence" value="ECO:0000318"/>
    <property type="project" value="GO_Central"/>
</dbReference>
<dbReference type="Gene3D" id="6.10.140.340">
    <property type="match status" value="1"/>
</dbReference>
<dbReference type="InterPro" id="IPR031176">
    <property type="entry name" value="ELL/occludin"/>
</dbReference>
<dbReference type="InterPro" id="IPR008253">
    <property type="entry name" value="Marvel"/>
</dbReference>
<dbReference type="InterPro" id="IPR002958">
    <property type="entry name" value="Occludin"/>
</dbReference>
<dbReference type="InterPro" id="IPR010844">
    <property type="entry name" value="Occludin_ELL"/>
</dbReference>
<dbReference type="PANTHER" id="PTHR23288:SF4">
    <property type="entry name" value="OCCLUDIN"/>
    <property type="match status" value="1"/>
</dbReference>
<dbReference type="PANTHER" id="PTHR23288">
    <property type="entry name" value="OCCLUDIN AND RNA POLYMERASE II ELONGATION FACTOR ELL"/>
    <property type="match status" value="1"/>
</dbReference>
<dbReference type="Pfam" id="PF01284">
    <property type="entry name" value="MARVEL"/>
    <property type="match status" value="1"/>
</dbReference>
<dbReference type="Pfam" id="PF07303">
    <property type="entry name" value="Occludin_ELL"/>
    <property type="match status" value="1"/>
</dbReference>
<dbReference type="PIRSF" id="PIRSF005993">
    <property type="entry name" value="Occludin"/>
    <property type="match status" value="1"/>
</dbReference>
<dbReference type="PRINTS" id="PR01258">
    <property type="entry name" value="OCCLUDIN"/>
</dbReference>
<dbReference type="SUPFAM" id="SSF144292">
    <property type="entry name" value="occludin/ELL-like"/>
    <property type="match status" value="1"/>
</dbReference>
<dbReference type="PROSITE" id="PS51225">
    <property type="entry name" value="MARVEL"/>
    <property type="match status" value="1"/>
</dbReference>
<dbReference type="PROSITE" id="PS51980">
    <property type="entry name" value="OCEL"/>
    <property type="match status" value="1"/>
</dbReference>
<proteinExistence type="evidence at protein level"/>
<feature type="chain" id="PRO_0000146743" description="Occludin">
    <location>
        <begin position="1"/>
        <end position="493"/>
    </location>
</feature>
<feature type="topological domain" description="Cytoplasmic" evidence="3">
    <location>
        <begin position="1"/>
        <end position="47"/>
    </location>
</feature>
<feature type="transmembrane region" description="Helical" evidence="3">
    <location>
        <begin position="48"/>
        <end position="70"/>
    </location>
</feature>
<feature type="topological domain" description="Extracellular" evidence="3">
    <location>
        <begin position="71"/>
        <end position="116"/>
    </location>
</feature>
<feature type="transmembrane region" description="Helical" evidence="3">
    <location>
        <begin position="117"/>
        <end position="141"/>
    </location>
</feature>
<feature type="topological domain" description="Cytoplasmic" evidence="3">
    <location>
        <begin position="142"/>
        <end position="151"/>
    </location>
</feature>
<feature type="transmembrane region" description="Helical" evidence="3">
    <location>
        <begin position="152"/>
        <end position="176"/>
    </location>
</feature>
<feature type="topological domain" description="Extracellular" evidence="3">
    <location>
        <begin position="177"/>
        <end position="224"/>
    </location>
</feature>
<feature type="transmembrane region" description="Helical" evidence="3">
    <location>
        <begin position="225"/>
        <end position="246"/>
    </location>
</feature>
<feature type="topological domain" description="Cytoplasmic" evidence="3">
    <location>
        <begin position="247"/>
        <end position="493"/>
    </location>
</feature>
<feature type="domain" description="MARVEL" evidence="5">
    <location>
        <begin position="41"/>
        <end position="250"/>
    </location>
</feature>
<feature type="domain" description="OCEL" evidence="6">
    <location>
        <begin position="386"/>
        <end position="493"/>
    </location>
</feature>
<feature type="region of interest" description="Disordered" evidence="7">
    <location>
        <begin position="334"/>
        <end position="407"/>
    </location>
</feature>
<feature type="coiled-coil region" evidence="3">
    <location>
        <begin position="396"/>
        <end position="428"/>
    </location>
</feature>
<feature type="compositionally biased region" description="Basic residues" evidence="7">
    <location>
        <begin position="352"/>
        <end position="361"/>
    </location>
</feature>
<feature type="compositionally biased region" description="Acidic residues" evidence="7">
    <location>
        <begin position="379"/>
        <end position="389"/>
    </location>
</feature>
<feature type="modified residue" description="Phosphothreonine; by CK2; in vitro" evidence="8">
    <location>
        <position position="375"/>
    </location>
</feature>
<feature type="modified residue" description="Phosphoserine; by CK2; in vitro" evidence="8">
    <location>
        <position position="379"/>
    </location>
</feature>
<feature type="disulfide bond" evidence="4">
    <location>
        <begin position="197"/>
        <end position="218"/>
    </location>
</feature>
<comment type="function">
    <text>Probably plays a role in the formation and regulation of the tight junction (TJ) paracellular permeability barrier.</text>
</comment>
<comment type="subunit">
    <text evidence="1">Interacts in vitro with cingulin, possibly directly. Interacts with ZO-1 (By similarity).</text>
</comment>
<comment type="interaction">
    <interactant intactId="EBI-79607">
        <id>Q9PUN1</id>
    </interactant>
    <interactant intactId="EBI-79525">
        <id>Q9PTD7</id>
        <label>cgn</label>
    </interactant>
    <organismsDiffer>false</organismsDiffer>
    <experiments>2</experiments>
</comment>
<comment type="subcellular location">
    <subcellularLocation>
        <location evidence="2">Cell membrane</location>
        <topology evidence="3">Multi-pass membrane protein</topology>
    </subcellularLocation>
    <subcellularLocation>
        <location evidence="2">Cell junction</location>
        <location evidence="2">Tight junction</location>
    </subcellularLocation>
</comment>
<comment type="tissue specificity">
    <text>Localized at tight junctions of both epithelial and endothelial cells.</text>
</comment>
<comment type="developmental stage">
    <text>A maternally synthesized protein. Found in granules in the peripheral cytoplasm in the fertilized egg, it localizes first to the basolateral membrane, then to tight junctions after cingulin and ZO-1. Nascent tight junctions are in place by the two-cell stage. The maternal form is more highly phosphorylated than the form detected in later developmental stages.</text>
</comment>
<comment type="domain">
    <text evidence="1">The C-terminus is cytoplasmic and is important for interaction with ZO-1. Necessary for the tight junction localization. Involved in the regulation of the permeability barrier function of the tight junction (By similarity).</text>
</comment>
<comment type="PTM">
    <text evidence="8">Phosphorylated.</text>
</comment>
<comment type="similarity">
    <text evidence="9">Belongs to the ELL/occludin family.</text>
</comment>
<gene>
    <name type="primary">ocln</name>
</gene>